<evidence type="ECO:0000255" key="1">
    <source>
        <dbReference type="HAMAP-Rule" id="MF_01604"/>
    </source>
</evidence>
<accession>B1LI38</accession>
<name>THIK_ECOSM</name>
<feature type="chain" id="PRO_1000198089" description="Thiamine kinase">
    <location>
        <begin position="1"/>
        <end position="274"/>
    </location>
</feature>
<gene>
    <name evidence="1" type="primary">thiK</name>
    <name type="ordered locus">EcSMS35_2020</name>
</gene>
<sequence>MPFRSNNPLTRDELLSRFFPQFHPVTTFNSGLSGGSFLIEHQGQRFVVRQPHDPDAPQSAFLRQYRALSQLPACIAPKPHLYLRDWMVVDYLPGEVKTYLPDTNELAGLLYYLHQQPRFGWRITLLPLLELYWQQSDPARRTVGWLRRLKRLHKAREPRPLRLSPLHMDVHAGNLVHSASGLKLIDWEYAGDGDIALELAAVWVENTDQHRQLVNDYATRAKIYPAQLWRQVRRWFPWLLMLKAGWFEYRWRQTGDQQFIRLADDTWRQLLIKQ</sequence>
<protein>
    <recommendedName>
        <fullName evidence="1">Thiamine kinase</fullName>
        <ecNumber evidence="1">2.7.1.89</ecNumber>
    </recommendedName>
</protein>
<keyword id="KW-0067">ATP-binding</keyword>
<keyword id="KW-0418">Kinase</keyword>
<keyword id="KW-0547">Nucleotide-binding</keyword>
<keyword id="KW-0808">Transferase</keyword>
<reference key="1">
    <citation type="journal article" date="2008" name="J. Bacteriol.">
        <title>Insights into the environmental resistance gene pool from the genome sequence of the multidrug-resistant environmental isolate Escherichia coli SMS-3-5.</title>
        <authorList>
            <person name="Fricke W.F."/>
            <person name="Wright M.S."/>
            <person name="Lindell A.H."/>
            <person name="Harkins D.M."/>
            <person name="Baker-Austin C."/>
            <person name="Ravel J."/>
            <person name="Stepanauskas R."/>
        </authorList>
    </citation>
    <scope>NUCLEOTIDE SEQUENCE [LARGE SCALE GENOMIC DNA]</scope>
    <source>
        <strain>SMS-3-5 / SECEC</strain>
    </source>
</reference>
<proteinExistence type="inferred from homology"/>
<comment type="function">
    <text evidence="1">Catalyzes the ATP-dependent phosphorylation of thiamine to thiamine phosphate. Is involved in thiamine salvage.</text>
</comment>
<comment type="catalytic activity">
    <reaction evidence="1">
        <text>thiamine + ATP = thiamine phosphate + ADP + H(+)</text>
        <dbReference type="Rhea" id="RHEA:12012"/>
        <dbReference type="ChEBI" id="CHEBI:15378"/>
        <dbReference type="ChEBI" id="CHEBI:18385"/>
        <dbReference type="ChEBI" id="CHEBI:30616"/>
        <dbReference type="ChEBI" id="CHEBI:37575"/>
        <dbReference type="ChEBI" id="CHEBI:456216"/>
        <dbReference type="EC" id="2.7.1.89"/>
    </reaction>
    <physiologicalReaction direction="left-to-right" evidence="1">
        <dbReference type="Rhea" id="RHEA:12013"/>
    </physiologicalReaction>
</comment>
<comment type="pathway">
    <text evidence="1">Cofactor biosynthesis; thiamine diphosphate biosynthesis; thiamine phosphate from thiamine: step 1/1.</text>
</comment>
<comment type="similarity">
    <text evidence="1">Belongs to the thiamine kinase family.</text>
</comment>
<organism>
    <name type="scientific">Escherichia coli (strain SMS-3-5 / SECEC)</name>
    <dbReference type="NCBI Taxonomy" id="439855"/>
    <lineage>
        <taxon>Bacteria</taxon>
        <taxon>Pseudomonadati</taxon>
        <taxon>Pseudomonadota</taxon>
        <taxon>Gammaproteobacteria</taxon>
        <taxon>Enterobacterales</taxon>
        <taxon>Enterobacteriaceae</taxon>
        <taxon>Escherichia</taxon>
    </lineage>
</organism>
<dbReference type="EC" id="2.7.1.89" evidence="1"/>
<dbReference type="EMBL" id="CP000970">
    <property type="protein sequence ID" value="ACB20083.1"/>
    <property type="molecule type" value="Genomic_DNA"/>
</dbReference>
<dbReference type="RefSeq" id="WP_001116603.1">
    <property type="nucleotide sequence ID" value="NC_010498.1"/>
</dbReference>
<dbReference type="SMR" id="B1LI38"/>
<dbReference type="KEGG" id="ecm:EcSMS35_2020"/>
<dbReference type="HOGENOM" id="CLU_055115_2_1_6"/>
<dbReference type="UniPathway" id="UPA00060">
    <property type="reaction ID" value="UER00596"/>
</dbReference>
<dbReference type="Proteomes" id="UP000007011">
    <property type="component" value="Chromosome"/>
</dbReference>
<dbReference type="GO" id="GO:0005524">
    <property type="term" value="F:ATP binding"/>
    <property type="evidence" value="ECO:0007669"/>
    <property type="project" value="UniProtKB-KW"/>
</dbReference>
<dbReference type="GO" id="GO:0019165">
    <property type="term" value="F:thiamine kinase activity"/>
    <property type="evidence" value="ECO:0007669"/>
    <property type="project" value="UniProtKB-UniRule"/>
</dbReference>
<dbReference type="GO" id="GO:0009229">
    <property type="term" value="P:thiamine diphosphate biosynthetic process"/>
    <property type="evidence" value="ECO:0007669"/>
    <property type="project" value="UniProtKB-UniRule"/>
</dbReference>
<dbReference type="GO" id="GO:0006772">
    <property type="term" value="P:thiamine metabolic process"/>
    <property type="evidence" value="ECO:0007669"/>
    <property type="project" value="InterPro"/>
</dbReference>
<dbReference type="FunFam" id="3.90.1200.10:FF:000004">
    <property type="entry name" value="Thiamine kinase"/>
    <property type="match status" value="1"/>
</dbReference>
<dbReference type="Gene3D" id="3.90.1200.10">
    <property type="match status" value="1"/>
</dbReference>
<dbReference type="HAMAP" id="MF_01604">
    <property type="entry name" value="Thiamine_kinase"/>
    <property type="match status" value="1"/>
</dbReference>
<dbReference type="InterPro" id="IPR002575">
    <property type="entry name" value="Aminoglycoside_PTrfase"/>
</dbReference>
<dbReference type="InterPro" id="IPR011009">
    <property type="entry name" value="Kinase-like_dom_sf"/>
</dbReference>
<dbReference type="InterPro" id="IPR014093">
    <property type="entry name" value="Thiamine_kinase"/>
</dbReference>
<dbReference type="NCBIfam" id="NF007620">
    <property type="entry name" value="PRK10271.1"/>
    <property type="match status" value="1"/>
</dbReference>
<dbReference type="NCBIfam" id="TIGR02721">
    <property type="entry name" value="ycfN_thiK"/>
    <property type="match status" value="1"/>
</dbReference>
<dbReference type="Pfam" id="PF01636">
    <property type="entry name" value="APH"/>
    <property type="match status" value="1"/>
</dbReference>
<dbReference type="SUPFAM" id="SSF56112">
    <property type="entry name" value="Protein kinase-like (PK-like)"/>
    <property type="match status" value="1"/>
</dbReference>